<sequence length="301" mass="33590">MSHTAEIPLVPGSESPLELKPLKAADPQIVYHRRAHRLLSLAKDSPLADYFELCRRLVSIQAKLAEGADFGQLLAWGKDEATPLSLLGSEADSYWQGLLQQLLSDLLPQVDESIARVVRLLMQQSPEQLSSWGRSLRQGHVSEVPAHFSLFIWAAMGVYWSHWAPMVIKRMDQRKVAQQSMCPVCGCHPVASVIVDQPRAGLRYLHCSLCESEWHYIRAHCTSCGQDKEMTIWSLDDAQAQVRIESCDECHGYTKMMFVENSPSMDVAADDLATLMLDSELNAKGFGATTLNPLLMAHETT</sequence>
<evidence type="ECO:0000255" key="1">
    <source>
        <dbReference type="HAMAP-Rule" id="MF_00611"/>
    </source>
</evidence>
<dbReference type="EMBL" id="CP000891">
    <property type="protein sequence ID" value="ABX47290.1"/>
    <property type="molecule type" value="Genomic_DNA"/>
</dbReference>
<dbReference type="RefSeq" id="WP_006084875.1">
    <property type="nucleotide sequence ID" value="NC_009997.1"/>
</dbReference>
<dbReference type="SMR" id="A9KV86"/>
<dbReference type="GeneID" id="11770471"/>
<dbReference type="KEGG" id="sbn:Sbal195_0108"/>
<dbReference type="HOGENOM" id="CLU_055275_0_0_6"/>
<dbReference type="Proteomes" id="UP000000770">
    <property type="component" value="Chromosome"/>
</dbReference>
<dbReference type="GO" id="GO:0005829">
    <property type="term" value="C:cytosol"/>
    <property type="evidence" value="ECO:0007669"/>
    <property type="project" value="TreeGrafter"/>
</dbReference>
<dbReference type="GO" id="GO:0008199">
    <property type="term" value="F:ferric iron binding"/>
    <property type="evidence" value="ECO:0007669"/>
    <property type="project" value="TreeGrafter"/>
</dbReference>
<dbReference type="GO" id="GO:0051604">
    <property type="term" value="P:protein maturation"/>
    <property type="evidence" value="ECO:0007669"/>
    <property type="project" value="TreeGrafter"/>
</dbReference>
<dbReference type="CDD" id="cd16341">
    <property type="entry name" value="FdhE"/>
    <property type="match status" value="1"/>
</dbReference>
<dbReference type="Gene3D" id="3.90.1670.10">
    <property type="entry name" value="FdhE-like domain"/>
    <property type="match status" value="1"/>
</dbReference>
<dbReference type="HAMAP" id="MF_00611">
    <property type="entry name" value="FdeH"/>
    <property type="match status" value="1"/>
</dbReference>
<dbReference type="InterPro" id="IPR024064">
    <property type="entry name" value="FdhE-like_sf"/>
</dbReference>
<dbReference type="InterPro" id="IPR056796">
    <property type="entry name" value="FdhE_C"/>
</dbReference>
<dbReference type="InterPro" id="IPR056797">
    <property type="entry name" value="FdhE_central"/>
</dbReference>
<dbReference type="InterPro" id="IPR056774">
    <property type="entry name" value="FdhE_N"/>
</dbReference>
<dbReference type="InterPro" id="IPR006452">
    <property type="entry name" value="Formate_DH_accessory"/>
</dbReference>
<dbReference type="NCBIfam" id="TIGR01562">
    <property type="entry name" value="FdhE"/>
    <property type="match status" value="1"/>
</dbReference>
<dbReference type="PANTHER" id="PTHR37689">
    <property type="entry name" value="PROTEIN FDHE"/>
    <property type="match status" value="1"/>
</dbReference>
<dbReference type="PANTHER" id="PTHR37689:SF1">
    <property type="entry name" value="PROTEIN FDHE"/>
    <property type="match status" value="1"/>
</dbReference>
<dbReference type="Pfam" id="PF24860">
    <property type="entry name" value="FdhE_C"/>
    <property type="match status" value="1"/>
</dbReference>
<dbReference type="Pfam" id="PF24859">
    <property type="entry name" value="FdhE_central"/>
    <property type="match status" value="1"/>
</dbReference>
<dbReference type="Pfam" id="PF04216">
    <property type="entry name" value="FdhE_N"/>
    <property type="match status" value="1"/>
</dbReference>
<dbReference type="PIRSF" id="PIRSF018296">
    <property type="entry name" value="Format_dh_formtn"/>
    <property type="match status" value="1"/>
</dbReference>
<dbReference type="SUPFAM" id="SSF144020">
    <property type="entry name" value="FdhE-like"/>
    <property type="match status" value="1"/>
</dbReference>
<feature type="chain" id="PRO_1000082573" description="Protein FdhE homolog">
    <location>
        <begin position="1"/>
        <end position="301"/>
    </location>
</feature>
<name>FDHE_SHEB9</name>
<gene>
    <name evidence="1" type="primary">fdhE</name>
    <name type="ordered locus">Sbal195_0108</name>
</gene>
<comment type="function">
    <text evidence="1">Necessary for formate dehydrogenase activity.</text>
</comment>
<comment type="subcellular location">
    <subcellularLocation>
        <location evidence="1">Cytoplasm</location>
    </subcellularLocation>
</comment>
<comment type="similarity">
    <text evidence="1">Belongs to the FdhE family.</text>
</comment>
<protein>
    <recommendedName>
        <fullName evidence="1">Protein FdhE homolog</fullName>
    </recommendedName>
</protein>
<organism>
    <name type="scientific">Shewanella baltica (strain OS195)</name>
    <dbReference type="NCBI Taxonomy" id="399599"/>
    <lineage>
        <taxon>Bacteria</taxon>
        <taxon>Pseudomonadati</taxon>
        <taxon>Pseudomonadota</taxon>
        <taxon>Gammaproteobacteria</taxon>
        <taxon>Alteromonadales</taxon>
        <taxon>Shewanellaceae</taxon>
        <taxon>Shewanella</taxon>
    </lineage>
</organism>
<keyword id="KW-0963">Cytoplasm</keyword>
<accession>A9KV86</accession>
<proteinExistence type="inferred from homology"/>
<reference key="1">
    <citation type="submission" date="2007-11" db="EMBL/GenBank/DDBJ databases">
        <title>Complete sequence of chromosome of Shewanella baltica OS195.</title>
        <authorList>
            <consortium name="US DOE Joint Genome Institute"/>
            <person name="Copeland A."/>
            <person name="Lucas S."/>
            <person name="Lapidus A."/>
            <person name="Barry K."/>
            <person name="Glavina del Rio T."/>
            <person name="Dalin E."/>
            <person name="Tice H."/>
            <person name="Pitluck S."/>
            <person name="Chain P."/>
            <person name="Malfatti S."/>
            <person name="Shin M."/>
            <person name="Vergez L."/>
            <person name="Schmutz J."/>
            <person name="Larimer F."/>
            <person name="Land M."/>
            <person name="Hauser L."/>
            <person name="Kyrpides N."/>
            <person name="Kim E."/>
            <person name="Brettar I."/>
            <person name="Rodrigues J."/>
            <person name="Konstantinidis K."/>
            <person name="Klappenbach J."/>
            <person name="Hofle M."/>
            <person name="Tiedje J."/>
            <person name="Richardson P."/>
        </authorList>
    </citation>
    <scope>NUCLEOTIDE SEQUENCE [LARGE SCALE GENOMIC DNA]</scope>
    <source>
        <strain>OS195</strain>
    </source>
</reference>